<feature type="chain" id="PRO_0000068817" description="2-methylisocitrate lyase">
    <location>
        <begin position="1"/>
        <end position="308"/>
    </location>
</feature>
<feature type="binding site" evidence="1">
    <location>
        <begin position="54"/>
        <end position="56"/>
    </location>
    <ligand>
        <name>substrate</name>
    </ligand>
</feature>
<feature type="binding site" evidence="1">
    <location>
        <position position="94"/>
    </location>
    <ligand>
        <name>Mg(2+)</name>
        <dbReference type="ChEBI" id="CHEBI:18420"/>
    </ligand>
</feature>
<feature type="binding site" evidence="1">
    <location>
        <position position="96"/>
    </location>
    <ligand>
        <name>Mg(2+)</name>
        <dbReference type="ChEBI" id="CHEBI:18420"/>
    </ligand>
</feature>
<feature type="binding site" evidence="1">
    <location>
        <begin position="131"/>
        <end position="132"/>
    </location>
    <ligand>
        <name>substrate</name>
    </ligand>
</feature>
<feature type="binding site" evidence="1">
    <location>
        <position position="166"/>
    </location>
    <ligand>
        <name>substrate</name>
    </ligand>
</feature>
<feature type="binding site" evidence="1">
    <location>
        <position position="196"/>
    </location>
    <ligand>
        <name>substrate</name>
    </ligand>
</feature>
<feature type="binding site" evidence="1">
    <location>
        <begin position="224"/>
        <end position="226"/>
    </location>
    <ligand>
        <name>substrate</name>
    </ligand>
</feature>
<feature type="binding site" evidence="1">
    <location>
        <position position="255"/>
    </location>
    <ligand>
        <name>substrate</name>
    </ligand>
</feature>
<feature type="binding site" evidence="1">
    <location>
        <position position="284"/>
    </location>
    <ligand>
        <name>substrate</name>
    </ligand>
</feature>
<name>PRPB_VIBCH</name>
<keyword id="KW-0456">Lyase</keyword>
<keyword id="KW-0460">Magnesium</keyword>
<keyword id="KW-0479">Metal-binding</keyword>
<keyword id="KW-1185">Reference proteome</keyword>
<dbReference type="EC" id="4.1.3.30" evidence="1"/>
<dbReference type="EMBL" id="AE003852">
    <property type="protein sequence ID" value="AAF94494.1"/>
    <property type="molecule type" value="Genomic_DNA"/>
</dbReference>
<dbReference type="PIR" id="H82212">
    <property type="entry name" value="H82212"/>
</dbReference>
<dbReference type="RefSeq" id="NP_230980.1">
    <property type="nucleotide sequence ID" value="NC_002505.1"/>
</dbReference>
<dbReference type="SMR" id="Q9KSC2"/>
<dbReference type="STRING" id="243277.VC_1336"/>
<dbReference type="DNASU" id="2614790"/>
<dbReference type="EnsemblBacteria" id="AAF94494">
    <property type="protein sequence ID" value="AAF94494"/>
    <property type="gene ID" value="VC_1336"/>
</dbReference>
<dbReference type="KEGG" id="vch:VC_1336"/>
<dbReference type="PATRIC" id="fig|243277.26.peg.1273"/>
<dbReference type="eggNOG" id="COG2513">
    <property type="taxonomic scope" value="Bacteria"/>
</dbReference>
<dbReference type="HOGENOM" id="CLU_027389_3_2_6"/>
<dbReference type="UniPathway" id="UPA00946"/>
<dbReference type="Proteomes" id="UP000000584">
    <property type="component" value="Chromosome 1"/>
</dbReference>
<dbReference type="GO" id="GO:0000287">
    <property type="term" value="F:magnesium ion binding"/>
    <property type="evidence" value="ECO:0007669"/>
    <property type="project" value="UniProtKB-UniRule"/>
</dbReference>
<dbReference type="GO" id="GO:0046421">
    <property type="term" value="F:methylisocitrate lyase activity"/>
    <property type="evidence" value="ECO:0000318"/>
    <property type="project" value="GO_Central"/>
</dbReference>
<dbReference type="GO" id="GO:0019629">
    <property type="term" value="P:propionate catabolic process, 2-methylcitrate cycle"/>
    <property type="evidence" value="ECO:0000318"/>
    <property type="project" value="GO_Central"/>
</dbReference>
<dbReference type="CDD" id="cd00377">
    <property type="entry name" value="ICL_PEPM"/>
    <property type="match status" value="1"/>
</dbReference>
<dbReference type="FunFam" id="3.20.20.60:FF:000009">
    <property type="entry name" value="2-methylisocitrate lyase"/>
    <property type="match status" value="1"/>
</dbReference>
<dbReference type="Gene3D" id="3.20.20.60">
    <property type="entry name" value="Phosphoenolpyruvate-binding domains"/>
    <property type="match status" value="1"/>
</dbReference>
<dbReference type="HAMAP" id="MF_01939">
    <property type="entry name" value="PrpB"/>
    <property type="match status" value="1"/>
</dbReference>
<dbReference type="InterPro" id="IPR039556">
    <property type="entry name" value="ICL/PEPM"/>
</dbReference>
<dbReference type="InterPro" id="IPR018523">
    <property type="entry name" value="Isocitrate_lyase_ph_CS"/>
</dbReference>
<dbReference type="InterPro" id="IPR012695">
    <property type="entry name" value="PrpB"/>
</dbReference>
<dbReference type="InterPro" id="IPR015813">
    <property type="entry name" value="Pyrv/PenolPyrv_kinase-like_dom"/>
</dbReference>
<dbReference type="InterPro" id="IPR040442">
    <property type="entry name" value="Pyrv_kinase-like_dom_sf"/>
</dbReference>
<dbReference type="NCBIfam" id="NF008455">
    <property type="entry name" value="PRK11320.1"/>
    <property type="match status" value="1"/>
</dbReference>
<dbReference type="NCBIfam" id="TIGR02317">
    <property type="entry name" value="prpB"/>
    <property type="match status" value="1"/>
</dbReference>
<dbReference type="PANTHER" id="PTHR42905:SF5">
    <property type="entry name" value="CARBOXYVINYL-CARBOXYPHOSPHONATE PHOSPHORYLMUTASE, CHLOROPLASTIC"/>
    <property type="match status" value="1"/>
</dbReference>
<dbReference type="PANTHER" id="PTHR42905">
    <property type="entry name" value="PHOSPHOENOLPYRUVATE CARBOXYLASE"/>
    <property type="match status" value="1"/>
</dbReference>
<dbReference type="Pfam" id="PF13714">
    <property type="entry name" value="PEP_mutase"/>
    <property type="match status" value="1"/>
</dbReference>
<dbReference type="SUPFAM" id="SSF51621">
    <property type="entry name" value="Phosphoenolpyruvate/pyruvate domain"/>
    <property type="match status" value="1"/>
</dbReference>
<dbReference type="PROSITE" id="PS00161">
    <property type="entry name" value="ISOCITRATE_LYASE"/>
    <property type="match status" value="1"/>
</dbReference>
<comment type="function">
    <text evidence="1">Involved in the catabolism of short chain fatty acids (SCFA) via the 2-methylcitrate cycle I (propionate degradation route). Catalyzes the thermodynamically favored C-C bond cleavage reaction of (2R,3S)-2-methylisocitrate to yield pyruvate and succinate via an alpha-carboxy-carbanion intermediate.</text>
</comment>
<comment type="catalytic activity">
    <reaction evidence="1">
        <text>(2S,3R)-3-hydroxybutane-1,2,3-tricarboxylate = pyruvate + succinate</text>
        <dbReference type="Rhea" id="RHEA:16809"/>
        <dbReference type="ChEBI" id="CHEBI:15361"/>
        <dbReference type="ChEBI" id="CHEBI:30031"/>
        <dbReference type="ChEBI" id="CHEBI:57429"/>
        <dbReference type="EC" id="4.1.3.30"/>
    </reaction>
</comment>
<comment type="cofactor">
    <cofactor evidence="1">
        <name>Mg(2+)</name>
        <dbReference type="ChEBI" id="CHEBI:18420"/>
    </cofactor>
</comment>
<comment type="pathway">
    <text evidence="1">Organic acid metabolism; propanoate degradation.</text>
</comment>
<comment type="subunit">
    <text evidence="1">Homotetramer; dimer of dimers.</text>
</comment>
<comment type="similarity">
    <text evidence="1">Belongs to the isocitrate lyase/PEP mutase superfamily. Methylisocitrate lyase family.</text>
</comment>
<accession>Q9KSC2</accession>
<protein>
    <recommendedName>
        <fullName evidence="1">2-methylisocitrate lyase</fullName>
        <shortName evidence="1">2-MIC</shortName>
        <shortName evidence="1">MICL</shortName>
        <ecNumber evidence="1">4.1.3.30</ecNumber>
    </recommendedName>
    <alternativeName>
        <fullName evidence="1">(2R,3S)-2-methylisocitrate lyase</fullName>
    </alternativeName>
</protein>
<proteinExistence type="inferred from homology"/>
<organism>
    <name type="scientific">Vibrio cholerae serotype O1 (strain ATCC 39315 / El Tor Inaba N16961)</name>
    <dbReference type="NCBI Taxonomy" id="243277"/>
    <lineage>
        <taxon>Bacteria</taxon>
        <taxon>Pseudomonadati</taxon>
        <taxon>Pseudomonadota</taxon>
        <taxon>Gammaproteobacteria</taxon>
        <taxon>Vibrionales</taxon>
        <taxon>Vibrionaceae</taxon>
        <taxon>Vibrio</taxon>
    </lineage>
</organism>
<reference key="1">
    <citation type="journal article" date="2000" name="Nature">
        <title>DNA sequence of both chromosomes of the cholera pathogen Vibrio cholerae.</title>
        <authorList>
            <person name="Heidelberg J.F."/>
            <person name="Eisen J.A."/>
            <person name="Nelson W.C."/>
            <person name="Clayton R.A."/>
            <person name="Gwinn M.L."/>
            <person name="Dodson R.J."/>
            <person name="Haft D.H."/>
            <person name="Hickey E.K."/>
            <person name="Peterson J.D."/>
            <person name="Umayam L.A."/>
            <person name="Gill S.R."/>
            <person name="Nelson K.E."/>
            <person name="Read T.D."/>
            <person name="Tettelin H."/>
            <person name="Richardson D.L."/>
            <person name="Ermolaeva M.D."/>
            <person name="Vamathevan J.J."/>
            <person name="Bass S."/>
            <person name="Qin H."/>
            <person name="Dragoi I."/>
            <person name="Sellers P."/>
            <person name="McDonald L.A."/>
            <person name="Utterback T.R."/>
            <person name="Fleischmann R.D."/>
            <person name="Nierman W.C."/>
            <person name="White O."/>
            <person name="Salzberg S.L."/>
            <person name="Smith H.O."/>
            <person name="Colwell R.R."/>
            <person name="Mekalanos J.J."/>
            <person name="Venter J.C."/>
            <person name="Fraser C.M."/>
        </authorList>
    </citation>
    <scope>NUCLEOTIDE SEQUENCE [LARGE SCALE GENOMIC DNA]</scope>
    <source>
        <strain>ATCC 39315 / El Tor Inaba N16961</strain>
    </source>
</reference>
<evidence type="ECO:0000255" key="1">
    <source>
        <dbReference type="HAMAP-Rule" id="MF_01939"/>
    </source>
</evidence>
<gene>
    <name evidence="1" type="primary">prpB</name>
    <name type="ordered locus">VC_1336</name>
</gene>
<sequence>MPNNKVKENPMSLSPGAKFRLAVKTHHPLQIVGTINPYCAMMAKSIGHQAIYLSGGGIANASYGLPDLGITTLNDVLVDVERITNACDLPLLVDIDTGFGGAFNIARTIKAMEKAGAAAVHMEDQVAQKRCGHRPNKAIVSQQEMVDRVKAAVDARINPEFVIMARTDALAVEGMDSAIERAIACVEAGADMIFPEAMTELKQYEQFSTALRSATGKPVPILANITEFGQTPLYSGEQLAAVNVDMVLYPLSAFRAMNKAAENVYRHLLEHGNQEALLDQMQTRKELYAYLHYHEYEDKLDQLFSQPS</sequence>